<feature type="chain" id="PRO_1000083250" description="Photosystem II reaction center protein Y">
    <location>
        <begin position="1"/>
        <end position="40"/>
    </location>
</feature>
<feature type="transmembrane region" description="Helical" evidence="1">
    <location>
        <begin position="5"/>
        <end position="23"/>
    </location>
</feature>
<name>PSBY_SYNE7</name>
<reference key="1">
    <citation type="submission" date="2005-08" db="EMBL/GenBank/DDBJ databases">
        <title>Complete sequence of chromosome 1 of Synechococcus elongatus PCC 7942.</title>
        <authorList>
            <consortium name="US DOE Joint Genome Institute"/>
            <person name="Copeland A."/>
            <person name="Lucas S."/>
            <person name="Lapidus A."/>
            <person name="Barry K."/>
            <person name="Detter J.C."/>
            <person name="Glavina T."/>
            <person name="Hammon N."/>
            <person name="Israni S."/>
            <person name="Pitluck S."/>
            <person name="Schmutz J."/>
            <person name="Larimer F."/>
            <person name="Land M."/>
            <person name="Kyrpides N."/>
            <person name="Lykidis A."/>
            <person name="Golden S."/>
            <person name="Richardson P."/>
        </authorList>
    </citation>
    <scope>NUCLEOTIDE SEQUENCE [LARGE SCALE GENOMIC DNA]</scope>
    <source>
        <strain>ATCC 33912 / PCC 7942 / FACHB-805</strain>
    </source>
</reference>
<sequence>MDWRLIVVLAPILLAGGWAVFNIGKAALEQINRALKGDQA</sequence>
<organism>
    <name type="scientific">Synechococcus elongatus (strain ATCC 33912 / PCC 7942 / FACHB-805)</name>
    <name type="common">Anacystis nidulans R2</name>
    <dbReference type="NCBI Taxonomy" id="1140"/>
    <lineage>
        <taxon>Bacteria</taxon>
        <taxon>Bacillati</taxon>
        <taxon>Cyanobacteriota</taxon>
        <taxon>Cyanophyceae</taxon>
        <taxon>Synechococcales</taxon>
        <taxon>Synechococcaceae</taxon>
        <taxon>Synechococcus</taxon>
    </lineage>
</organism>
<proteinExistence type="inferred from homology"/>
<protein>
    <recommendedName>
        <fullName evidence="1">Photosystem II reaction center protein Y</fullName>
    </recommendedName>
</protein>
<gene>
    <name evidence="1" type="primary">psbY</name>
    <name type="ordered locus">Synpcc7942_1962</name>
</gene>
<accession>Q31LS7</accession>
<keyword id="KW-0472">Membrane</keyword>
<keyword id="KW-0602">Photosynthesis</keyword>
<keyword id="KW-0604">Photosystem II</keyword>
<keyword id="KW-1185">Reference proteome</keyword>
<keyword id="KW-0793">Thylakoid</keyword>
<keyword id="KW-0812">Transmembrane</keyword>
<keyword id="KW-1133">Transmembrane helix</keyword>
<comment type="function">
    <text evidence="1">Loosely associated component of the core of photosystem II (PSII), it is not always seen in crystals. PSII is a light-driven water plastoquinone oxidoreductase, using light energy to abstract electrons from H(2)O, generating a proton gradient subsequently used for ATP formation.</text>
</comment>
<comment type="subunit">
    <text evidence="1">PSII is composed of 1 copy each of membrane proteins PsbA, PsbB, PsbC, PsbD, PsbE, PsbF, PsbH, PsbI, PsbJ, PsbK, PsbL, PsbM, PsbT, PsbX, PsbY, PsbZ, Psb30/Ycf12, peripheral proteins PsbO, CyanoQ (PsbQ), PsbU, PsbV and a large number of cofactors. It forms dimeric complexes.</text>
</comment>
<comment type="subcellular location">
    <subcellularLocation>
        <location evidence="1">Cellular thylakoid membrane</location>
        <topology evidence="1">Single-pass membrane protein</topology>
    </subcellularLocation>
</comment>
<comment type="similarity">
    <text evidence="1">Belongs to the PsbY family.</text>
</comment>
<evidence type="ECO:0000255" key="1">
    <source>
        <dbReference type="HAMAP-Rule" id="MF_00717"/>
    </source>
</evidence>
<dbReference type="EMBL" id="CP000100">
    <property type="protein sequence ID" value="ABB57992.1"/>
    <property type="molecule type" value="Genomic_DNA"/>
</dbReference>
<dbReference type="RefSeq" id="WP_011244443.1">
    <property type="nucleotide sequence ID" value="NZ_JACJTX010000001.1"/>
</dbReference>
<dbReference type="SMR" id="Q31LS7"/>
<dbReference type="STRING" id="1140.Synpcc7942_1962"/>
<dbReference type="PaxDb" id="1140-Synpcc7942_1962"/>
<dbReference type="KEGG" id="syf:Synpcc7942_1962"/>
<dbReference type="HOGENOM" id="CLU_218393_1_0_3"/>
<dbReference type="OrthoDB" id="561045at2"/>
<dbReference type="BioCyc" id="SYNEL:SYNPCC7942_1962-MONOMER"/>
<dbReference type="Proteomes" id="UP000889800">
    <property type="component" value="Chromosome"/>
</dbReference>
<dbReference type="GO" id="GO:0009523">
    <property type="term" value="C:photosystem II"/>
    <property type="evidence" value="ECO:0007669"/>
    <property type="project" value="UniProtKB-KW"/>
</dbReference>
<dbReference type="GO" id="GO:0031676">
    <property type="term" value="C:plasma membrane-derived thylakoid membrane"/>
    <property type="evidence" value="ECO:0007669"/>
    <property type="project" value="UniProtKB-SubCell"/>
</dbReference>
<dbReference type="GO" id="GO:0030145">
    <property type="term" value="F:manganese ion binding"/>
    <property type="evidence" value="ECO:0007669"/>
    <property type="project" value="InterPro"/>
</dbReference>
<dbReference type="GO" id="GO:0015979">
    <property type="term" value="P:photosynthesis"/>
    <property type="evidence" value="ECO:0007669"/>
    <property type="project" value="UniProtKB-UniRule"/>
</dbReference>
<dbReference type="HAMAP" id="MF_00717">
    <property type="entry name" value="PSII_PsbY"/>
    <property type="match status" value="1"/>
</dbReference>
<dbReference type="InterPro" id="IPR009388">
    <property type="entry name" value="PSII_PsbY"/>
</dbReference>
<dbReference type="NCBIfam" id="NF009711">
    <property type="entry name" value="PRK13240.1"/>
    <property type="match status" value="1"/>
</dbReference>
<dbReference type="Pfam" id="PF06298">
    <property type="entry name" value="PsbY"/>
    <property type="match status" value="1"/>
</dbReference>